<organism>
    <name type="scientific">Staphylococcus aureus (strain USA300)</name>
    <dbReference type="NCBI Taxonomy" id="367830"/>
    <lineage>
        <taxon>Bacteria</taxon>
        <taxon>Bacillati</taxon>
        <taxon>Bacillota</taxon>
        <taxon>Bacilli</taxon>
        <taxon>Bacillales</taxon>
        <taxon>Staphylococcaceae</taxon>
        <taxon>Staphylococcus</taxon>
    </lineage>
</organism>
<sequence>MPKVIGLTGGIASGKSTVSELLSVFGFKVVDADKAAREAVKKGSKGLAQVREVFGDEAIDENGEMNRRYMGDLVFNHPEKRLELNAIIHPIVRDIMEEEKQEYLKQGYNVIMDIPLLFENELENTVDEVWVVYTSESIQMDRLMQRNNLSLEDAKARVYSQISIDKKSRMADHVIDNLGDKLELKQNLERLLEEEGYIEKPNYGEED</sequence>
<gene>
    <name evidence="1" type="primary">coaE</name>
    <name type="ordered locus">SAUSA300_1634</name>
</gene>
<comment type="function">
    <text evidence="1">Catalyzes the phosphorylation of the 3'-hydroxyl group of dephosphocoenzyme A to form coenzyme A.</text>
</comment>
<comment type="catalytic activity">
    <reaction evidence="1">
        <text>3'-dephospho-CoA + ATP = ADP + CoA + H(+)</text>
        <dbReference type="Rhea" id="RHEA:18245"/>
        <dbReference type="ChEBI" id="CHEBI:15378"/>
        <dbReference type="ChEBI" id="CHEBI:30616"/>
        <dbReference type="ChEBI" id="CHEBI:57287"/>
        <dbReference type="ChEBI" id="CHEBI:57328"/>
        <dbReference type="ChEBI" id="CHEBI:456216"/>
        <dbReference type="EC" id="2.7.1.24"/>
    </reaction>
</comment>
<comment type="pathway">
    <text evidence="1">Cofactor biosynthesis; coenzyme A biosynthesis; CoA from (R)-pantothenate: step 5/5.</text>
</comment>
<comment type="subcellular location">
    <subcellularLocation>
        <location evidence="1">Cytoplasm</location>
    </subcellularLocation>
</comment>
<comment type="similarity">
    <text evidence="1">Belongs to the CoaE family.</text>
</comment>
<proteinExistence type="inferred from homology"/>
<name>COAE_STAA3</name>
<feature type="chain" id="PRO_0000243345" description="Dephospho-CoA kinase">
    <location>
        <begin position="1"/>
        <end position="207"/>
    </location>
</feature>
<feature type="domain" description="DPCK" evidence="1">
    <location>
        <begin position="4"/>
        <end position="203"/>
    </location>
</feature>
<feature type="binding site" evidence="1">
    <location>
        <begin position="12"/>
        <end position="17"/>
    </location>
    <ligand>
        <name>ATP</name>
        <dbReference type="ChEBI" id="CHEBI:30616"/>
    </ligand>
</feature>
<dbReference type="EC" id="2.7.1.24" evidence="1"/>
<dbReference type="EMBL" id="CP000255">
    <property type="protein sequence ID" value="ABD21499.1"/>
    <property type="molecule type" value="Genomic_DNA"/>
</dbReference>
<dbReference type="RefSeq" id="WP_001127167.1">
    <property type="nucleotide sequence ID" value="NZ_CP027476.1"/>
</dbReference>
<dbReference type="SMR" id="Q2FG49"/>
<dbReference type="KEGG" id="saa:SAUSA300_1634"/>
<dbReference type="HOGENOM" id="CLU_057180_0_0_9"/>
<dbReference type="OMA" id="CQMDIEQ"/>
<dbReference type="UniPathway" id="UPA00241">
    <property type="reaction ID" value="UER00356"/>
</dbReference>
<dbReference type="Proteomes" id="UP000001939">
    <property type="component" value="Chromosome"/>
</dbReference>
<dbReference type="GO" id="GO:0005737">
    <property type="term" value="C:cytoplasm"/>
    <property type="evidence" value="ECO:0007669"/>
    <property type="project" value="UniProtKB-SubCell"/>
</dbReference>
<dbReference type="GO" id="GO:0005524">
    <property type="term" value="F:ATP binding"/>
    <property type="evidence" value="ECO:0007669"/>
    <property type="project" value="UniProtKB-UniRule"/>
</dbReference>
<dbReference type="GO" id="GO:0004140">
    <property type="term" value="F:dephospho-CoA kinase activity"/>
    <property type="evidence" value="ECO:0007669"/>
    <property type="project" value="UniProtKB-UniRule"/>
</dbReference>
<dbReference type="GO" id="GO:0015937">
    <property type="term" value="P:coenzyme A biosynthetic process"/>
    <property type="evidence" value="ECO:0007669"/>
    <property type="project" value="UniProtKB-UniRule"/>
</dbReference>
<dbReference type="CDD" id="cd02022">
    <property type="entry name" value="DPCK"/>
    <property type="match status" value="1"/>
</dbReference>
<dbReference type="FunFam" id="3.40.50.300:FF:000991">
    <property type="entry name" value="Dephospho-CoA kinase"/>
    <property type="match status" value="1"/>
</dbReference>
<dbReference type="Gene3D" id="3.40.50.300">
    <property type="entry name" value="P-loop containing nucleotide triphosphate hydrolases"/>
    <property type="match status" value="1"/>
</dbReference>
<dbReference type="HAMAP" id="MF_00376">
    <property type="entry name" value="Dephospho_CoA_kinase"/>
    <property type="match status" value="1"/>
</dbReference>
<dbReference type="InterPro" id="IPR001977">
    <property type="entry name" value="Depp_CoAkinase"/>
</dbReference>
<dbReference type="InterPro" id="IPR027417">
    <property type="entry name" value="P-loop_NTPase"/>
</dbReference>
<dbReference type="NCBIfam" id="TIGR00152">
    <property type="entry name" value="dephospho-CoA kinase"/>
    <property type="match status" value="1"/>
</dbReference>
<dbReference type="PANTHER" id="PTHR10695:SF46">
    <property type="entry name" value="BIFUNCTIONAL COENZYME A SYNTHASE-RELATED"/>
    <property type="match status" value="1"/>
</dbReference>
<dbReference type="PANTHER" id="PTHR10695">
    <property type="entry name" value="DEPHOSPHO-COA KINASE-RELATED"/>
    <property type="match status" value="1"/>
</dbReference>
<dbReference type="Pfam" id="PF01121">
    <property type="entry name" value="CoaE"/>
    <property type="match status" value="1"/>
</dbReference>
<dbReference type="SUPFAM" id="SSF52540">
    <property type="entry name" value="P-loop containing nucleoside triphosphate hydrolases"/>
    <property type="match status" value="1"/>
</dbReference>
<dbReference type="PROSITE" id="PS51219">
    <property type="entry name" value="DPCK"/>
    <property type="match status" value="1"/>
</dbReference>
<evidence type="ECO:0000255" key="1">
    <source>
        <dbReference type="HAMAP-Rule" id="MF_00376"/>
    </source>
</evidence>
<accession>Q2FG49</accession>
<keyword id="KW-0067">ATP-binding</keyword>
<keyword id="KW-0173">Coenzyme A biosynthesis</keyword>
<keyword id="KW-0963">Cytoplasm</keyword>
<keyword id="KW-0418">Kinase</keyword>
<keyword id="KW-0547">Nucleotide-binding</keyword>
<keyword id="KW-0808">Transferase</keyword>
<reference key="1">
    <citation type="journal article" date="2006" name="Lancet">
        <title>Complete genome sequence of USA300, an epidemic clone of community-acquired meticillin-resistant Staphylococcus aureus.</title>
        <authorList>
            <person name="Diep B.A."/>
            <person name="Gill S.R."/>
            <person name="Chang R.F."/>
            <person name="Phan T.H."/>
            <person name="Chen J.H."/>
            <person name="Davidson M.G."/>
            <person name="Lin F."/>
            <person name="Lin J."/>
            <person name="Carleton H.A."/>
            <person name="Mongodin E.F."/>
            <person name="Sensabaugh G.F."/>
            <person name="Perdreau-Remington F."/>
        </authorList>
    </citation>
    <scope>NUCLEOTIDE SEQUENCE [LARGE SCALE GENOMIC DNA]</scope>
    <source>
        <strain>USA300</strain>
    </source>
</reference>
<protein>
    <recommendedName>
        <fullName evidence="1">Dephospho-CoA kinase</fullName>
        <ecNumber evidence="1">2.7.1.24</ecNumber>
    </recommendedName>
    <alternativeName>
        <fullName evidence="1">Dephosphocoenzyme A kinase</fullName>
    </alternativeName>
</protein>